<name>NUOCD_BLOPB</name>
<protein>
    <recommendedName>
        <fullName evidence="1">NADH-quinone oxidoreductase subunit C/D</fullName>
        <ecNumber evidence="1">7.1.1.-</ecNumber>
    </recommendedName>
    <alternativeName>
        <fullName evidence="1">NADH dehydrogenase I subunit C/D</fullName>
    </alternativeName>
    <alternativeName>
        <fullName evidence="1">NDH-1 subunit C/D</fullName>
    </alternativeName>
</protein>
<reference key="1">
    <citation type="journal article" date="2005" name="Genome Res.">
        <title>Genome sequence of Blochmannia pennsylvanicus indicates parallel evolutionary trends among bacterial mutualists of insects.</title>
        <authorList>
            <person name="Degnan P.H."/>
            <person name="Lazarus A.B."/>
            <person name="Wernegreen J.J."/>
        </authorList>
    </citation>
    <scope>NUCLEOTIDE SEQUENCE [LARGE SCALE GENOMIC DNA]</scope>
    <source>
        <strain>BPEN</strain>
    </source>
</reference>
<evidence type="ECO:0000255" key="1">
    <source>
        <dbReference type="HAMAP-Rule" id="MF_01359"/>
    </source>
</evidence>
<keyword id="KW-0997">Cell inner membrane</keyword>
<keyword id="KW-1003">Cell membrane</keyword>
<keyword id="KW-0472">Membrane</keyword>
<keyword id="KW-0511">Multifunctional enzyme</keyword>
<keyword id="KW-0520">NAD</keyword>
<keyword id="KW-0874">Quinone</keyword>
<keyword id="KW-1185">Reference proteome</keyword>
<keyword id="KW-1278">Translocase</keyword>
<keyword id="KW-0813">Transport</keyword>
<keyword id="KW-0830">Ubiquinone</keyword>
<sequence length="596" mass="68703">MVDIMCNDSTGVSLVKNIYPILDDLFSVFSSVDFVLQPTHTGILIIWIKREMVIPVLTFLKTTSKPYIMLYDLHGIDERLRIHREGLPESDFTVFYHLISILRNDDIIIKVPLLEQSLYIDTVVSVFANANWYERETWEMFGIHFNKHPNLTRIIMPKNWNGYPLRKEYPARATEFNPFILTKQKEDLAMEGLLFKPEEWGMHKHSKHENFMFLNLGPNHPSVHGVFRIILQLNGEEIIDCVPDIGYHHRGAEKMGERQTWHSYIPYTDRIEYLGGCVNEMPYILAVEKLAGITVPDRVKVIRIMLSELFRINSHLLYISTYLQDVGAMSPVFLAFTDRQKIYDVIESITGSRMHPAWFRIGGVAHDLPRGWECLLRKCLDWIPHRVSFYVKSTLENSIFKKRACGIGAYNAKDALDWGVTGAGLRATGIEFDIRKSRPYSGYENFDFDVPIGNGISDSYSRVMLKVEEIYQSVRILEQCLQNMPIGPFKSDHPLATPPMKEYALQHIETLITHFLQVSWGPVIPANESFQMIEATKGINSYYLISDGNTMSYRTRIRTPSFPHLQQIPHVIRGSLISDLIVYLGSIDFVMSDVDR</sequence>
<feature type="chain" id="PRO_0000358623" description="NADH-quinone oxidoreductase subunit C/D">
    <location>
        <begin position="1"/>
        <end position="596"/>
    </location>
</feature>
<feature type="region of interest" description="NADH dehydrogenase I subunit C" evidence="1">
    <location>
        <begin position="1"/>
        <end position="186"/>
    </location>
</feature>
<feature type="region of interest" description="NADH dehydrogenase I subunit D" evidence="1">
    <location>
        <begin position="210"/>
        <end position="596"/>
    </location>
</feature>
<organism>
    <name type="scientific">Blochmanniella pennsylvanica (strain BPEN)</name>
    <dbReference type="NCBI Taxonomy" id="291272"/>
    <lineage>
        <taxon>Bacteria</taxon>
        <taxon>Pseudomonadati</taxon>
        <taxon>Pseudomonadota</taxon>
        <taxon>Gammaproteobacteria</taxon>
        <taxon>Enterobacterales</taxon>
        <taxon>Enterobacteriaceae</taxon>
        <taxon>ant endosymbionts</taxon>
        <taxon>Candidatus Blochmanniella</taxon>
    </lineage>
</organism>
<dbReference type="EC" id="7.1.1.-" evidence="1"/>
<dbReference type="EMBL" id="CP000016">
    <property type="protein sequence ID" value="AAZ41121.1"/>
    <property type="molecule type" value="Genomic_DNA"/>
</dbReference>
<dbReference type="SMR" id="Q492H8"/>
<dbReference type="STRING" id="291272.BPEN_507"/>
<dbReference type="KEGG" id="bpn:BPEN_507"/>
<dbReference type="eggNOG" id="COG0649">
    <property type="taxonomic scope" value="Bacteria"/>
</dbReference>
<dbReference type="eggNOG" id="COG0852">
    <property type="taxonomic scope" value="Bacteria"/>
</dbReference>
<dbReference type="HOGENOM" id="CLU_015134_3_2_6"/>
<dbReference type="Proteomes" id="UP000007794">
    <property type="component" value="Chromosome"/>
</dbReference>
<dbReference type="GO" id="GO:0030964">
    <property type="term" value="C:NADH dehydrogenase complex"/>
    <property type="evidence" value="ECO:0007669"/>
    <property type="project" value="InterPro"/>
</dbReference>
<dbReference type="GO" id="GO:0005886">
    <property type="term" value="C:plasma membrane"/>
    <property type="evidence" value="ECO:0007669"/>
    <property type="project" value="UniProtKB-SubCell"/>
</dbReference>
<dbReference type="GO" id="GO:0051287">
    <property type="term" value="F:NAD binding"/>
    <property type="evidence" value="ECO:0007669"/>
    <property type="project" value="InterPro"/>
</dbReference>
<dbReference type="GO" id="GO:0008137">
    <property type="term" value="F:NADH dehydrogenase (ubiquinone) activity"/>
    <property type="evidence" value="ECO:0007669"/>
    <property type="project" value="InterPro"/>
</dbReference>
<dbReference type="GO" id="GO:0050136">
    <property type="term" value="F:NADH:ubiquinone reductase (non-electrogenic) activity"/>
    <property type="evidence" value="ECO:0007669"/>
    <property type="project" value="UniProtKB-UniRule"/>
</dbReference>
<dbReference type="GO" id="GO:0048038">
    <property type="term" value="F:quinone binding"/>
    <property type="evidence" value="ECO:0007669"/>
    <property type="project" value="UniProtKB-KW"/>
</dbReference>
<dbReference type="FunFam" id="1.10.645.10:FF:000001">
    <property type="entry name" value="NADH-quinone oxidoreductase subunit C/D"/>
    <property type="match status" value="1"/>
</dbReference>
<dbReference type="Gene3D" id="1.10.645.10">
    <property type="entry name" value="Cytochrome-c3 Hydrogenase, chain B"/>
    <property type="match status" value="1"/>
</dbReference>
<dbReference type="Gene3D" id="3.30.460.80">
    <property type="entry name" value="NADH:ubiquinone oxidoreductase, 30kDa subunit"/>
    <property type="match status" value="1"/>
</dbReference>
<dbReference type="HAMAP" id="MF_01359">
    <property type="entry name" value="NDH1_NuoCD_1"/>
    <property type="match status" value="1"/>
</dbReference>
<dbReference type="HAMAP" id="MF_01358">
    <property type="entry name" value="NDH1_NuoD"/>
    <property type="match status" value="1"/>
</dbReference>
<dbReference type="InterPro" id="IPR010218">
    <property type="entry name" value="NADH_DH_suC"/>
</dbReference>
<dbReference type="InterPro" id="IPR023062">
    <property type="entry name" value="NADH_DH_suCD"/>
</dbReference>
<dbReference type="InterPro" id="IPR001135">
    <property type="entry name" value="NADH_Q_OxRdtase_suD"/>
</dbReference>
<dbReference type="InterPro" id="IPR037232">
    <property type="entry name" value="NADH_quin_OxRdtase_su_C/D-like"/>
</dbReference>
<dbReference type="InterPro" id="IPR001268">
    <property type="entry name" value="NADH_UbQ_OxRdtase_30kDa_su"/>
</dbReference>
<dbReference type="InterPro" id="IPR014029">
    <property type="entry name" value="NADH_UbQ_OxRdtase_49kDa_CS"/>
</dbReference>
<dbReference type="InterPro" id="IPR022885">
    <property type="entry name" value="NDH1_su_D/H"/>
</dbReference>
<dbReference type="InterPro" id="IPR029014">
    <property type="entry name" value="NiFe-Hase_large"/>
</dbReference>
<dbReference type="NCBIfam" id="TIGR01961">
    <property type="entry name" value="NuoC_fam"/>
    <property type="match status" value="1"/>
</dbReference>
<dbReference type="NCBIfam" id="TIGR01962">
    <property type="entry name" value="NuoD"/>
    <property type="match status" value="1"/>
</dbReference>
<dbReference type="NCBIfam" id="NF004739">
    <property type="entry name" value="PRK06075.1"/>
    <property type="match status" value="1"/>
</dbReference>
<dbReference type="NCBIfam" id="NF008728">
    <property type="entry name" value="PRK11742.1"/>
    <property type="match status" value="1"/>
</dbReference>
<dbReference type="PANTHER" id="PTHR11993:SF45">
    <property type="entry name" value="NADH-QUINONE OXIDOREDUCTASE SUBUNIT C_D"/>
    <property type="match status" value="1"/>
</dbReference>
<dbReference type="PANTHER" id="PTHR11993">
    <property type="entry name" value="NADH-UBIQUINONE OXIDOREDUCTASE 49 KDA SUBUNIT"/>
    <property type="match status" value="1"/>
</dbReference>
<dbReference type="Pfam" id="PF00329">
    <property type="entry name" value="Complex1_30kDa"/>
    <property type="match status" value="1"/>
</dbReference>
<dbReference type="Pfam" id="PF00346">
    <property type="entry name" value="Complex1_49kDa"/>
    <property type="match status" value="1"/>
</dbReference>
<dbReference type="SUPFAM" id="SSF56762">
    <property type="entry name" value="HydB/Nqo4-like"/>
    <property type="match status" value="1"/>
</dbReference>
<dbReference type="SUPFAM" id="SSF143243">
    <property type="entry name" value="Nqo5-like"/>
    <property type="match status" value="1"/>
</dbReference>
<dbReference type="PROSITE" id="PS00535">
    <property type="entry name" value="COMPLEX1_49K"/>
    <property type="match status" value="1"/>
</dbReference>
<proteinExistence type="inferred from homology"/>
<comment type="function">
    <text evidence="1">NDH-1 shuttles electrons from NADH, via FMN and iron-sulfur (Fe-S) centers, to quinones in the respiratory chain. The immediate electron acceptor for the enzyme in this species is believed to be ubiquinone. Couples the redox reaction to proton translocation (for every two electrons transferred, four hydrogen ions are translocated across the cytoplasmic membrane), and thus conserves the redox energy in a proton gradient.</text>
</comment>
<comment type="catalytic activity">
    <reaction evidence="1">
        <text>a quinone + NADH + 5 H(+)(in) = a quinol + NAD(+) + 4 H(+)(out)</text>
        <dbReference type="Rhea" id="RHEA:57888"/>
        <dbReference type="ChEBI" id="CHEBI:15378"/>
        <dbReference type="ChEBI" id="CHEBI:24646"/>
        <dbReference type="ChEBI" id="CHEBI:57540"/>
        <dbReference type="ChEBI" id="CHEBI:57945"/>
        <dbReference type="ChEBI" id="CHEBI:132124"/>
    </reaction>
</comment>
<comment type="subunit">
    <text evidence="1">NDH-1 is composed of 13 different subunits. Subunits NuoB, CD, E, F, and G constitute the peripheral sector of the complex.</text>
</comment>
<comment type="subcellular location">
    <subcellularLocation>
        <location evidence="1">Cell inner membrane</location>
        <topology evidence="1">Peripheral membrane protein</topology>
        <orientation evidence="1">Cytoplasmic side</orientation>
    </subcellularLocation>
</comment>
<comment type="similarity">
    <text evidence="1">In the N-terminal section; belongs to the complex I 30 kDa subunit family.</text>
</comment>
<comment type="similarity">
    <text evidence="1">In the C-terminal section; belongs to the complex I 49 kDa subunit family.</text>
</comment>
<gene>
    <name evidence="1" type="primary">nuoC</name>
    <name evidence="1" type="synonym">nuoCD</name>
    <name evidence="1" type="synonym">nuoD</name>
    <name type="ordered locus">BPEN_507</name>
</gene>
<accession>Q492H8</accession>